<name>PSBJ_MAGTR</name>
<protein>
    <recommendedName>
        <fullName evidence="1">Photosystem II reaction center protein J</fullName>
        <shortName evidence="1">PSII-J</shortName>
    </recommendedName>
</protein>
<proteinExistence type="inferred from homology"/>
<accession>O03076</accession>
<gene>
    <name evidence="1" type="primary">psbJ</name>
</gene>
<feature type="chain" id="PRO_0000216598" description="Photosystem II reaction center protein J">
    <location>
        <begin position="1"/>
        <end position="40"/>
    </location>
</feature>
<feature type="transmembrane region" description="Helical" evidence="1">
    <location>
        <begin position="8"/>
        <end position="28"/>
    </location>
</feature>
<reference key="1">
    <citation type="online journal article" date="1997" name="Plant Gene Register">
        <title>Nucleotide sequence of a psbJ (ORF40) genomic clone from the North American Magnolia tripetala.</title>
        <authorList>
            <person name="Jobes D.V."/>
            <person name="Hurley D.L."/>
            <person name="Thien L.B."/>
        </authorList>
        <locator>PGR97-073</locator>
    </citation>
    <scope>NUCLEOTIDE SEQUENCE [GENOMIC DNA]</scope>
</reference>
<organism>
    <name type="scientific">Magnolia tripetala</name>
    <name type="common">Umbrella-tree</name>
    <name type="synonym">Magnolia virginiana var. tripetala</name>
    <dbReference type="NCBI Taxonomy" id="44926"/>
    <lineage>
        <taxon>Eukaryota</taxon>
        <taxon>Viridiplantae</taxon>
        <taxon>Streptophyta</taxon>
        <taxon>Embryophyta</taxon>
        <taxon>Tracheophyta</taxon>
        <taxon>Spermatophyta</taxon>
        <taxon>Magnoliopsida</taxon>
        <taxon>Magnoliidae</taxon>
        <taxon>Magnoliales</taxon>
        <taxon>Magnoliaceae</taxon>
        <taxon>Magnolia</taxon>
    </lineage>
</organism>
<sequence length="40" mass="4137">MADTTGRIPLWLIGTVTGIPVIGSMGIFFYGSYSGLGSSL</sequence>
<dbReference type="EMBL" id="U91962">
    <property type="protein sequence ID" value="AAB68963.1"/>
    <property type="molecule type" value="Genomic_DNA"/>
</dbReference>
<dbReference type="RefSeq" id="YP_009026895.1">
    <property type="nucleotide sequence ID" value="NC_024027.1"/>
</dbReference>
<dbReference type="SMR" id="O03076"/>
<dbReference type="GeneID" id="19019317"/>
<dbReference type="GO" id="GO:0009535">
    <property type="term" value="C:chloroplast thylakoid membrane"/>
    <property type="evidence" value="ECO:0007669"/>
    <property type="project" value="UniProtKB-SubCell"/>
</dbReference>
<dbReference type="GO" id="GO:0009539">
    <property type="term" value="C:photosystem II reaction center"/>
    <property type="evidence" value="ECO:0007669"/>
    <property type="project" value="InterPro"/>
</dbReference>
<dbReference type="GO" id="GO:0015979">
    <property type="term" value="P:photosynthesis"/>
    <property type="evidence" value="ECO:0007669"/>
    <property type="project" value="UniProtKB-UniRule"/>
</dbReference>
<dbReference type="Gene3D" id="6.10.250.2070">
    <property type="match status" value="1"/>
</dbReference>
<dbReference type="HAMAP" id="MF_01305">
    <property type="entry name" value="PSII_PsbJ"/>
    <property type="match status" value="1"/>
</dbReference>
<dbReference type="InterPro" id="IPR002682">
    <property type="entry name" value="PSII_PsbJ"/>
</dbReference>
<dbReference type="InterPro" id="IPR037267">
    <property type="entry name" value="PSII_PsbJ_sf"/>
</dbReference>
<dbReference type="NCBIfam" id="NF002722">
    <property type="entry name" value="PRK02565.1"/>
    <property type="match status" value="1"/>
</dbReference>
<dbReference type="PANTHER" id="PTHR34812">
    <property type="entry name" value="PHOTOSYSTEM II REACTION CENTER PROTEIN J"/>
    <property type="match status" value="1"/>
</dbReference>
<dbReference type="PANTHER" id="PTHR34812:SF3">
    <property type="entry name" value="PHOTOSYSTEM II REACTION CENTER PROTEIN J"/>
    <property type="match status" value="1"/>
</dbReference>
<dbReference type="Pfam" id="PF01788">
    <property type="entry name" value="PsbJ"/>
    <property type="match status" value="1"/>
</dbReference>
<dbReference type="SUPFAM" id="SSF161021">
    <property type="entry name" value="Photosystem II reaction center protein J, PsbJ"/>
    <property type="match status" value="1"/>
</dbReference>
<comment type="function">
    <text evidence="1">One of the components of the core complex of photosystem II (PSII). PSII is a light-driven water:plastoquinone oxidoreductase that uses light energy to abstract electrons from H(2)O, generating O(2) and a proton gradient subsequently used for ATP formation. It consists of a core antenna complex that captures photons, and an electron transfer chain that converts photonic excitation into a charge separation.</text>
</comment>
<comment type="subunit">
    <text evidence="1">PSII is composed of 1 copy each of membrane proteins PsbA, PsbB, PsbC, PsbD, PsbE, PsbF, PsbH, PsbI, PsbJ, PsbK, PsbL, PsbM, PsbT, PsbX, PsbY, PsbZ, Psb30/Ycf12, at least 3 peripheral proteins of the oxygen-evolving complex and a large number of cofactors. It forms dimeric complexes.</text>
</comment>
<comment type="subcellular location">
    <subcellularLocation>
        <location evidence="1">Plastid</location>
        <location evidence="1">Chloroplast thylakoid membrane</location>
        <topology evidence="1">Single-pass membrane protein</topology>
    </subcellularLocation>
</comment>
<comment type="similarity">
    <text evidence="1">Belongs to the PsbJ family.</text>
</comment>
<geneLocation type="chloroplast"/>
<keyword id="KW-0150">Chloroplast</keyword>
<keyword id="KW-0472">Membrane</keyword>
<keyword id="KW-0602">Photosynthesis</keyword>
<keyword id="KW-0604">Photosystem II</keyword>
<keyword id="KW-0934">Plastid</keyword>
<keyword id="KW-0674">Reaction center</keyword>
<keyword id="KW-0793">Thylakoid</keyword>
<keyword id="KW-0812">Transmembrane</keyword>
<keyword id="KW-1133">Transmembrane helix</keyword>
<evidence type="ECO:0000255" key="1">
    <source>
        <dbReference type="HAMAP-Rule" id="MF_01305"/>
    </source>
</evidence>